<gene>
    <name type="primary">rhgB</name>
    <name type="ORF">AFUB_058150</name>
</gene>
<sequence>MRLHAFTLLSLLGLVPSFAAASLSGSVGPLTSASAKAAKKTCNVLDYGAKADKKTDLGPPLAAAFAACKSGGLVYIPAGDYAMSTWVKLANGKAWALQIDGVIYRTGTDGGNMIMIEHTSDFELYSSTSSGAMQGLGYEFHASNNWSGPRLLRLWDVSDFSVHDLILVDSPSFHFSIDTCSNGEVYNMAIRGGNHGGLDGVDVWSTNIWIHDLEVTNKDECVTVKSPAKNILVENIYCNLSGGCAMGSLGADTDISDITYKNIYTWNSNQMMMIKSNGGSGTVSNVVFENFIGHGNAYSLDIDSFWSSMSAVSGDGVTLNNITIKNWKGTEANGAQRGPIKIICPDKVPCYNILIEDFAMWTETGSKQWYSCQSAYGSGFCLKSGSHHTSYAVTTTTVSSAPSGYSAAKMASDLSTDFGSTKSIPIPTIPTSFYPGATPYSALMSKQSTKAAKARAVDMSVETPAAASRSEQVVQGAPQETGQSAPESAGPVPSGNPGPVPTGGSRPSRHRHGHHHFGSAI</sequence>
<organism>
    <name type="scientific">Aspergillus fumigatus (strain CBS 144.89 / FGSC A1163 / CEA10)</name>
    <name type="common">Neosartorya fumigata</name>
    <dbReference type="NCBI Taxonomy" id="451804"/>
    <lineage>
        <taxon>Eukaryota</taxon>
        <taxon>Fungi</taxon>
        <taxon>Dikarya</taxon>
        <taxon>Ascomycota</taxon>
        <taxon>Pezizomycotina</taxon>
        <taxon>Eurotiomycetes</taxon>
        <taxon>Eurotiomycetidae</taxon>
        <taxon>Eurotiales</taxon>
        <taxon>Aspergillaceae</taxon>
        <taxon>Aspergillus</taxon>
        <taxon>Aspergillus subgen. Fumigati</taxon>
    </lineage>
</organism>
<protein>
    <recommendedName>
        <fullName>Probable rhamnogalacturonase B</fullName>
        <shortName>RGase B</shortName>
        <shortName>RHG B</shortName>
        <ecNumber>3.2.1.171</ecNumber>
    </recommendedName>
</protein>
<feature type="signal peptide" evidence="2">
    <location>
        <begin position="1"/>
        <end position="21"/>
    </location>
</feature>
<feature type="chain" id="PRO_0000394386" description="Probable rhamnogalacturonase B">
    <location>
        <begin position="22"/>
        <end position="521"/>
    </location>
</feature>
<feature type="region of interest" description="Disordered" evidence="3">
    <location>
        <begin position="462"/>
        <end position="521"/>
    </location>
</feature>
<feature type="compositionally biased region" description="Polar residues" evidence="3">
    <location>
        <begin position="469"/>
        <end position="486"/>
    </location>
</feature>
<feature type="compositionally biased region" description="Basic residues" evidence="3">
    <location>
        <begin position="507"/>
        <end position="521"/>
    </location>
</feature>
<feature type="active site" description="Proton donor" evidence="1">
    <location>
        <position position="219"/>
    </location>
</feature>
<feature type="active site" evidence="1">
    <location>
        <position position="294"/>
    </location>
</feature>
<feature type="glycosylation site" description="N-linked (GlcNAc...) asparagine" evidence="2">
    <location>
        <position position="145"/>
    </location>
</feature>
<feature type="glycosylation site" description="N-linked (GlcNAc...) asparagine" evidence="2">
    <location>
        <position position="239"/>
    </location>
</feature>
<feature type="glycosylation site" description="N-linked (GlcNAc...) asparagine" evidence="2">
    <location>
        <position position="321"/>
    </location>
</feature>
<feature type="disulfide bond" evidence="1">
    <location>
        <begin position="42"/>
        <end position="68"/>
    </location>
</feature>
<feature type="disulfide bond" evidence="1">
    <location>
        <begin position="221"/>
        <end position="238"/>
    </location>
</feature>
<feature type="disulfide bond" evidence="1">
    <location>
        <begin position="344"/>
        <end position="350"/>
    </location>
</feature>
<feature type="disulfide bond" evidence="1">
    <location>
        <begin position="372"/>
        <end position="381"/>
    </location>
</feature>
<accession>B0Y0Q3</accession>
<proteinExistence type="inferred from homology"/>
<evidence type="ECO:0000250" key="1"/>
<evidence type="ECO:0000255" key="2"/>
<evidence type="ECO:0000256" key="3">
    <source>
        <dbReference type="SAM" id="MobiDB-lite"/>
    </source>
</evidence>
<evidence type="ECO:0000305" key="4"/>
<dbReference type="EC" id="3.2.1.171"/>
<dbReference type="EMBL" id="DS499597">
    <property type="protein sequence ID" value="EDP51794.1"/>
    <property type="molecule type" value="Genomic_DNA"/>
</dbReference>
<dbReference type="SMR" id="B0Y0Q3"/>
<dbReference type="GlyCosmos" id="B0Y0Q3">
    <property type="glycosylation" value="3 sites, No reported glycans"/>
</dbReference>
<dbReference type="EnsemblFungi" id="EDP51794">
    <property type="protein sequence ID" value="EDP51794"/>
    <property type="gene ID" value="AFUB_058150"/>
</dbReference>
<dbReference type="VEuPathDB" id="FungiDB:AFUB_058150"/>
<dbReference type="HOGENOM" id="CLU_016031_7_2_1"/>
<dbReference type="OrthoDB" id="108300at5052"/>
<dbReference type="PhylomeDB" id="B0Y0Q3"/>
<dbReference type="Proteomes" id="UP000001699">
    <property type="component" value="Unassembled WGS sequence"/>
</dbReference>
<dbReference type="GO" id="GO:0005576">
    <property type="term" value="C:extracellular region"/>
    <property type="evidence" value="ECO:0007669"/>
    <property type="project" value="UniProtKB-SubCell"/>
</dbReference>
<dbReference type="GO" id="GO:0004650">
    <property type="term" value="F:polygalacturonase activity"/>
    <property type="evidence" value="ECO:0007669"/>
    <property type="project" value="InterPro"/>
</dbReference>
<dbReference type="GO" id="GO:0046576">
    <property type="term" value="F:rhamnogalacturonan alpha-L-rhamnopyranosyl-(1-&gt;4)-alpha-D-galactopyranosyluronide lyase activity"/>
    <property type="evidence" value="ECO:0000250"/>
    <property type="project" value="UniProtKB"/>
</dbReference>
<dbReference type="GO" id="GO:0071555">
    <property type="term" value="P:cell wall organization"/>
    <property type="evidence" value="ECO:0007669"/>
    <property type="project" value="UniProtKB-KW"/>
</dbReference>
<dbReference type="GO" id="GO:0045490">
    <property type="term" value="P:pectin catabolic process"/>
    <property type="evidence" value="ECO:0000250"/>
    <property type="project" value="UniProtKB"/>
</dbReference>
<dbReference type="FunFam" id="2.160.20.10:FF:000025">
    <property type="entry name" value="Probable rhamnogalacturonase B"/>
    <property type="match status" value="1"/>
</dbReference>
<dbReference type="Gene3D" id="2.160.20.10">
    <property type="entry name" value="Single-stranded right-handed beta-helix, Pectin lyase-like"/>
    <property type="match status" value="1"/>
</dbReference>
<dbReference type="InterPro" id="IPR000743">
    <property type="entry name" value="Glyco_hydro_28"/>
</dbReference>
<dbReference type="InterPro" id="IPR012334">
    <property type="entry name" value="Pectin_lyas_fold"/>
</dbReference>
<dbReference type="InterPro" id="IPR011050">
    <property type="entry name" value="Pectin_lyase_fold/virulence"/>
</dbReference>
<dbReference type="InterPro" id="IPR024535">
    <property type="entry name" value="RHGA/B-epi-like_pectate_lyase"/>
</dbReference>
<dbReference type="PANTHER" id="PTHR31736">
    <property type="match status" value="1"/>
</dbReference>
<dbReference type="PANTHER" id="PTHR31736:SF19">
    <property type="entry name" value="PECTIN LYASE SUPERFAMILY PROTEIN-RELATED"/>
    <property type="match status" value="1"/>
</dbReference>
<dbReference type="Pfam" id="PF00295">
    <property type="entry name" value="Glyco_hydro_28"/>
    <property type="match status" value="1"/>
</dbReference>
<dbReference type="Pfam" id="PF12708">
    <property type="entry name" value="Pect-lyase_RHGA_epim"/>
    <property type="match status" value="1"/>
</dbReference>
<dbReference type="SUPFAM" id="SSF51126">
    <property type="entry name" value="Pectin lyase-like"/>
    <property type="match status" value="1"/>
</dbReference>
<reference key="1">
    <citation type="journal article" date="2008" name="PLoS Genet.">
        <title>Genomic islands in the pathogenic filamentous fungus Aspergillus fumigatus.</title>
        <authorList>
            <person name="Fedorova N.D."/>
            <person name="Khaldi N."/>
            <person name="Joardar V.S."/>
            <person name="Maiti R."/>
            <person name="Amedeo P."/>
            <person name="Anderson M.J."/>
            <person name="Crabtree J."/>
            <person name="Silva J.C."/>
            <person name="Badger J.H."/>
            <person name="Albarraq A."/>
            <person name="Angiuoli S."/>
            <person name="Bussey H."/>
            <person name="Bowyer P."/>
            <person name="Cotty P.J."/>
            <person name="Dyer P.S."/>
            <person name="Egan A."/>
            <person name="Galens K."/>
            <person name="Fraser-Liggett C.M."/>
            <person name="Haas B.J."/>
            <person name="Inman J.M."/>
            <person name="Kent R."/>
            <person name="Lemieux S."/>
            <person name="Malavazi I."/>
            <person name="Orvis J."/>
            <person name="Roemer T."/>
            <person name="Ronning C.M."/>
            <person name="Sundaram J.P."/>
            <person name="Sutton G."/>
            <person name="Turner G."/>
            <person name="Venter J.C."/>
            <person name="White O.R."/>
            <person name="Whitty B.R."/>
            <person name="Youngman P."/>
            <person name="Wolfe K.H."/>
            <person name="Goldman G.H."/>
            <person name="Wortman J.R."/>
            <person name="Jiang B."/>
            <person name="Denning D.W."/>
            <person name="Nierman W.C."/>
        </authorList>
    </citation>
    <scope>NUCLEOTIDE SEQUENCE [LARGE SCALE GENOMIC DNA]</scope>
    <source>
        <strain>CBS 144.89 / FGSC A1163 / CEA10</strain>
    </source>
</reference>
<comment type="function">
    <text evidence="1">Pectinolytic enzymes consist of four classes of enzymes: pectine lyase, polygalacturonase, pectin methylesterase and rhamnogalacturonase. Hydrolyzes alpha-D-galacturonopyranosyl-(1,2)-alpha-L-rhamnopyranosyl linkages in the backbone of the hairy regions of pectins (By similarity).</text>
</comment>
<comment type="catalytic activity">
    <reaction>
        <text>Endohydrolysis of alpha-D-GalA-(1-&gt;2)-alpha-L-Rha glycosidic bond in the rhamnogalacturonan I backbone with initial inversion of anomeric configuration releasing oligosaccharides with beta-D-GalA at the reducing end.</text>
        <dbReference type="EC" id="3.2.1.171"/>
    </reaction>
</comment>
<comment type="subcellular location">
    <subcellularLocation>
        <location evidence="1">Secreted</location>
    </subcellularLocation>
</comment>
<comment type="similarity">
    <text evidence="4">Belongs to the glycosyl hydrolase 28 family.</text>
</comment>
<keyword id="KW-0119">Carbohydrate metabolism</keyword>
<keyword id="KW-0961">Cell wall biogenesis/degradation</keyword>
<keyword id="KW-1015">Disulfide bond</keyword>
<keyword id="KW-0325">Glycoprotein</keyword>
<keyword id="KW-0326">Glycosidase</keyword>
<keyword id="KW-0378">Hydrolase</keyword>
<keyword id="KW-0624">Polysaccharide degradation</keyword>
<keyword id="KW-0964">Secreted</keyword>
<keyword id="KW-0732">Signal</keyword>
<name>RHGB_ASPFC</name>